<keyword id="KW-0963">Cytoplasm</keyword>
<keyword id="KW-0342">GTP-binding</keyword>
<keyword id="KW-0378">Hydrolase</keyword>
<keyword id="KW-0460">Magnesium</keyword>
<keyword id="KW-0479">Metal-binding</keyword>
<keyword id="KW-0547">Nucleotide-binding</keyword>
<keyword id="KW-0630">Potassium</keyword>
<keyword id="KW-1185">Reference proteome</keyword>
<keyword id="KW-0819">tRNA processing</keyword>
<accession>A0LLH5</accession>
<feature type="chain" id="PRO_0000345922" description="tRNA modification GTPase MnmE">
    <location>
        <begin position="1"/>
        <end position="470"/>
    </location>
</feature>
<feature type="domain" description="TrmE-type G">
    <location>
        <begin position="231"/>
        <end position="391"/>
    </location>
</feature>
<feature type="binding site" evidence="1">
    <location>
        <position position="27"/>
    </location>
    <ligand>
        <name>(6S)-5-formyl-5,6,7,8-tetrahydrofolate</name>
        <dbReference type="ChEBI" id="CHEBI:57457"/>
    </ligand>
</feature>
<feature type="binding site" evidence="1">
    <location>
        <position position="90"/>
    </location>
    <ligand>
        <name>(6S)-5-formyl-5,6,7,8-tetrahydrofolate</name>
        <dbReference type="ChEBI" id="CHEBI:57457"/>
    </ligand>
</feature>
<feature type="binding site" evidence="1">
    <location>
        <position position="129"/>
    </location>
    <ligand>
        <name>(6S)-5-formyl-5,6,7,8-tetrahydrofolate</name>
        <dbReference type="ChEBI" id="CHEBI:57457"/>
    </ligand>
</feature>
<feature type="binding site" evidence="1">
    <location>
        <begin position="241"/>
        <end position="246"/>
    </location>
    <ligand>
        <name>GTP</name>
        <dbReference type="ChEBI" id="CHEBI:37565"/>
    </ligand>
</feature>
<feature type="binding site" evidence="1">
    <location>
        <position position="245"/>
    </location>
    <ligand>
        <name>Mg(2+)</name>
        <dbReference type="ChEBI" id="CHEBI:18420"/>
    </ligand>
</feature>
<feature type="binding site" evidence="1">
    <location>
        <begin position="260"/>
        <end position="266"/>
    </location>
    <ligand>
        <name>GTP</name>
        <dbReference type="ChEBI" id="CHEBI:37565"/>
    </ligand>
</feature>
<feature type="binding site" evidence="1">
    <location>
        <position position="266"/>
    </location>
    <ligand>
        <name>Mg(2+)</name>
        <dbReference type="ChEBI" id="CHEBI:18420"/>
    </ligand>
</feature>
<feature type="binding site" evidence="1">
    <location>
        <begin position="285"/>
        <end position="288"/>
    </location>
    <ligand>
        <name>GTP</name>
        <dbReference type="ChEBI" id="CHEBI:37565"/>
    </ligand>
</feature>
<feature type="binding site" evidence="1">
    <location>
        <position position="470"/>
    </location>
    <ligand>
        <name>(6S)-5-formyl-5,6,7,8-tetrahydrofolate</name>
        <dbReference type="ChEBI" id="CHEBI:57457"/>
    </ligand>
</feature>
<sequence>MVELKGTHDTICAIATPVGEGGIGIIKISGPEATAIARRLFMRSGSGSGLESHRLYHGWIKDPVTGQSLDEVLVGTMAAPHTYTREDVVEINCHSGFAVLNRILELVLREGARLADPGEFTRRAFLNGRIDLSQAEAVIEVIRSRSEQGLLLANRLLRGALGEKVRSWREGLLELQSRIEATIDFEDDLDEDALCAVSDRARFVTRLDGELIPALSAALESAERSRALREGVSLVLAGKPNVGKSSLLNALVGRDRAIVTPFPGTTRDVVEDTFLLSGILVRVLDTAGLRHDPDEIESFGIARTIQSLEEADIVLCVMDRSRPLSAEDDAVVEAVASRPFVIVLNKEDLPPAISTGKIRERYGENVPIMAISALRPPDVERLRDFLNQRFLRLPLEQSGSAIVPNLRQRGCIEKALQAMIRARDLISGGGFWELASTELRTARNELDSVLGWNGDDALLDRIFSDFCIGK</sequence>
<evidence type="ECO:0000255" key="1">
    <source>
        <dbReference type="HAMAP-Rule" id="MF_00379"/>
    </source>
</evidence>
<protein>
    <recommendedName>
        <fullName evidence="1">tRNA modification GTPase MnmE</fullName>
        <ecNumber evidence="1">3.6.-.-</ecNumber>
    </recommendedName>
</protein>
<reference key="1">
    <citation type="submission" date="2006-10" db="EMBL/GenBank/DDBJ databases">
        <title>Complete sequence of Syntrophobacter fumaroxidans MPOB.</title>
        <authorList>
            <consortium name="US DOE Joint Genome Institute"/>
            <person name="Copeland A."/>
            <person name="Lucas S."/>
            <person name="Lapidus A."/>
            <person name="Barry K."/>
            <person name="Detter J.C."/>
            <person name="Glavina del Rio T."/>
            <person name="Hammon N."/>
            <person name="Israni S."/>
            <person name="Pitluck S."/>
            <person name="Goltsman E.G."/>
            <person name="Martinez M."/>
            <person name="Schmutz J."/>
            <person name="Larimer F."/>
            <person name="Land M."/>
            <person name="Hauser L."/>
            <person name="Kyrpides N."/>
            <person name="Kim E."/>
            <person name="Boone D.R."/>
            <person name="Brockman F."/>
            <person name="Culley D."/>
            <person name="Ferry J."/>
            <person name="Gunsalus R."/>
            <person name="McInerney M.J."/>
            <person name="Morrison M."/>
            <person name="Plugge C."/>
            <person name="Rohlin L."/>
            <person name="Scholten J."/>
            <person name="Sieber J."/>
            <person name="Stams A.J.M."/>
            <person name="Worm P."/>
            <person name="Henstra A.M."/>
            <person name="Richardson P."/>
        </authorList>
    </citation>
    <scope>NUCLEOTIDE SEQUENCE [LARGE SCALE GENOMIC DNA]</scope>
    <source>
        <strain>DSM 10017 / MPOB</strain>
    </source>
</reference>
<name>MNME_SYNFM</name>
<proteinExistence type="inferred from homology"/>
<organism>
    <name type="scientific">Syntrophobacter fumaroxidans (strain DSM 10017 / MPOB)</name>
    <dbReference type="NCBI Taxonomy" id="335543"/>
    <lineage>
        <taxon>Bacteria</taxon>
        <taxon>Pseudomonadati</taxon>
        <taxon>Thermodesulfobacteriota</taxon>
        <taxon>Syntrophobacteria</taxon>
        <taxon>Syntrophobacterales</taxon>
        <taxon>Syntrophobacteraceae</taxon>
        <taxon>Syntrophobacter</taxon>
    </lineage>
</organism>
<gene>
    <name evidence="1" type="primary">mnmE</name>
    <name evidence="1" type="synonym">trmE</name>
    <name type="ordered locus">Sfum_2599</name>
</gene>
<comment type="function">
    <text evidence="1">Exhibits a very high intrinsic GTPase hydrolysis rate. Involved in the addition of a carboxymethylaminomethyl (cmnm) group at the wobble position (U34) of certain tRNAs, forming tRNA-cmnm(5)s(2)U34.</text>
</comment>
<comment type="cofactor">
    <cofactor evidence="1">
        <name>K(+)</name>
        <dbReference type="ChEBI" id="CHEBI:29103"/>
    </cofactor>
    <text evidence="1">Binds 1 potassium ion per subunit.</text>
</comment>
<comment type="subunit">
    <text evidence="1">Homodimer. Heterotetramer of two MnmE and two MnmG subunits.</text>
</comment>
<comment type="subcellular location">
    <subcellularLocation>
        <location evidence="1">Cytoplasm</location>
    </subcellularLocation>
</comment>
<comment type="similarity">
    <text evidence="1">Belongs to the TRAFAC class TrmE-Era-EngA-EngB-Septin-like GTPase superfamily. TrmE GTPase family.</text>
</comment>
<dbReference type="EC" id="3.6.-.-" evidence="1"/>
<dbReference type="EMBL" id="CP000478">
    <property type="protein sequence ID" value="ABK18277.1"/>
    <property type="molecule type" value="Genomic_DNA"/>
</dbReference>
<dbReference type="RefSeq" id="WP_011699445.1">
    <property type="nucleotide sequence ID" value="NC_008554.1"/>
</dbReference>
<dbReference type="SMR" id="A0LLH5"/>
<dbReference type="FunCoup" id="A0LLH5">
    <property type="interactions" value="550"/>
</dbReference>
<dbReference type="STRING" id="335543.Sfum_2599"/>
<dbReference type="KEGG" id="sfu:Sfum_2599"/>
<dbReference type="eggNOG" id="COG0486">
    <property type="taxonomic scope" value="Bacteria"/>
</dbReference>
<dbReference type="HOGENOM" id="CLU_019624_4_1_7"/>
<dbReference type="InParanoid" id="A0LLH5"/>
<dbReference type="OrthoDB" id="9805918at2"/>
<dbReference type="Proteomes" id="UP000001784">
    <property type="component" value="Chromosome"/>
</dbReference>
<dbReference type="GO" id="GO:0005829">
    <property type="term" value="C:cytosol"/>
    <property type="evidence" value="ECO:0007669"/>
    <property type="project" value="TreeGrafter"/>
</dbReference>
<dbReference type="GO" id="GO:0005525">
    <property type="term" value="F:GTP binding"/>
    <property type="evidence" value="ECO:0007669"/>
    <property type="project" value="UniProtKB-UniRule"/>
</dbReference>
<dbReference type="GO" id="GO:0003924">
    <property type="term" value="F:GTPase activity"/>
    <property type="evidence" value="ECO:0007669"/>
    <property type="project" value="UniProtKB-UniRule"/>
</dbReference>
<dbReference type="GO" id="GO:0046872">
    <property type="term" value="F:metal ion binding"/>
    <property type="evidence" value="ECO:0007669"/>
    <property type="project" value="UniProtKB-KW"/>
</dbReference>
<dbReference type="GO" id="GO:0030488">
    <property type="term" value="P:tRNA methylation"/>
    <property type="evidence" value="ECO:0007669"/>
    <property type="project" value="TreeGrafter"/>
</dbReference>
<dbReference type="GO" id="GO:0002098">
    <property type="term" value="P:tRNA wobble uridine modification"/>
    <property type="evidence" value="ECO:0007669"/>
    <property type="project" value="TreeGrafter"/>
</dbReference>
<dbReference type="CDD" id="cd04164">
    <property type="entry name" value="trmE"/>
    <property type="match status" value="1"/>
</dbReference>
<dbReference type="CDD" id="cd14858">
    <property type="entry name" value="TrmE_N"/>
    <property type="match status" value="1"/>
</dbReference>
<dbReference type="FunFam" id="3.30.1360.120:FF:000003">
    <property type="entry name" value="tRNA modification GTPase MnmE"/>
    <property type="match status" value="1"/>
</dbReference>
<dbReference type="FunFam" id="3.40.50.300:FF:001376">
    <property type="entry name" value="tRNA modification GTPase MnmE"/>
    <property type="match status" value="1"/>
</dbReference>
<dbReference type="Gene3D" id="3.40.50.300">
    <property type="entry name" value="P-loop containing nucleotide triphosphate hydrolases"/>
    <property type="match status" value="1"/>
</dbReference>
<dbReference type="Gene3D" id="3.30.1360.120">
    <property type="entry name" value="Probable tRNA modification gtpase trme, domain 1"/>
    <property type="match status" value="1"/>
</dbReference>
<dbReference type="Gene3D" id="1.20.120.430">
    <property type="entry name" value="tRNA modification GTPase MnmE domain 2"/>
    <property type="match status" value="1"/>
</dbReference>
<dbReference type="HAMAP" id="MF_00379">
    <property type="entry name" value="GTPase_MnmE"/>
    <property type="match status" value="1"/>
</dbReference>
<dbReference type="InterPro" id="IPR031168">
    <property type="entry name" value="G_TrmE"/>
</dbReference>
<dbReference type="InterPro" id="IPR006073">
    <property type="entry name" value="GTP-bd"/>
</dbReference>
<dbReference type="InterPro" id="IPR018948">
    <property type="entry name" value="GTP-bd_TrmE_N"/>
</dbReference>
<dbReference type="InterPro" id="IPR004520">
    <property type="entry name" value="GTPase_MnmE"/>
</dbReference>
<dbReference type="InterPro" id="IPR027368">
    <property type="entry name" value="MnmE_dom2"/>
</dbReference>
<dbReference type="InterPro" id="IPR025867">
    <property type="entry name" value="MnmE_helical"/>
</dbReference>
<dbReference type="InterPro" id="IPR027417">
    <property type="entry name" value="P-loop_NTPase"/>
</dbReference>
<dbReference type="InterPro" id="IPR005225">
    <property type="entry name" value="Small_GTP-bd"/>
</dbReference>
<dbReference type="InterPro" id="IPR027266">
    <property type="entry name" value="TrmE/GcvT_dom1"/>
</dbReference>
<dbReference type="NCBIfam" id="TIGR00450">
    <property type="entry name" value="mnmE_trmE_thdF"/>
    <property type="match status" value="1"/>
</dbReference>
<dbReference type="NCBIfam" id="TIGR00231">
    <property type="entry name" value="small_GTP"/>
    <property type="match status" value="1"/>
</dbReference>
<dbReference type="PANTHER" id="PTHR42714">
    <property type="entry name" value="TRNA MODIFICATION GTPASE GTPBP3"/>
    <property type="match status" value="1"/>
</dbReference>
<dbReference type="PANTHER" id="PTHR42714:SF2">
    <property type="entry name" value="TRNA MODIFICATION GTPASE GTPBP3, MITOCHONDRIAL"/>
    <property type="match status" value="1"/>
</dbReference>
<dbReference type="Pfam" id="PF01926">
    <property type="entry name" value="MMR_HSR1"/>
    <property type="match status" value="1"/>
</dbReference>
<dbReference type="Pfam" id="PF12631">
    <property type="entry name" value="MnmE_helical"/>
    <property type="match status" value="1"/>
</dbReference>
<dbReference type="Pfam" id="PF10396">
    <property type="entry name" value="TrmE_N"/>
    <property type="match status" value="1"/>
</dbReference>
<dbReference type="SUPFAM" id="SSF52540">
    <property type="entry name" value="P-loop containing nucleoside triphosphate hydrolases"/>
    <property type="match status" value="1"/>
</dbReference>
<dbReference type="PROSITE" id="PS51709">
    <property type="entry name" value="G_TRME"/>
    <property type="match status" value="1"/>
</dbReference>